<feature type="chain" id="PRO_0000413969" description="Beta-amyrin synthase">
    <location>
        <begin position="1"/>
        <end position="758"/>
    </location>
</feature>
<feature type="repeat" description="PFTB 1">
    <location>
        <begin position="148"/>
        <end position="189"/>
    </location>
</feature>
<feature type="repeat" description="PFTB 2">
    <location>
        <begin position="514"/>
        <end position="556"/>
    </location>
</feature>
<feature type="repeat" description="PFTB 3">
    <location>
        <begin position="591"/>
        <end position="631"/>
    </location>
</feature>
<feature type="repeat" description="PFTB 4">
    <location>
        <begin position="640"/>
        <end position="681"/>
    </location>
</feature>
<feature type="active site" description="Proton donor" evidence="2">
    <location>
        <position position="485"/>
    </location>
</feature>
<gene>
    <name type="primary">OSCPSY</name>
</gene>
<proteinExistence type="evidence at transcript level"/>
<evidence type="ECO:0000250" key="1"/>
<evidence type="ECO:0000250" key="2">
    <source>
        <dbReference type="UniProtKB" id="P48449"/>
    </source>
</evidence>
<evidence type="ECO:0000305" key="3"/>
<comment type="function">
    <text evidence="1">Oxidosqualene cyclase converting oxidosqualene into beta-amyrin, generating five rings and eight asymmetric centers in a single transformation.</text>
</comment>
<comment type="catalytic activity">
    <reaction>
        <text>(S)-2,3-epoxysqualene = beta-amyrin</text>
        <dbReference type="Rhea" id="RHEA:31007"/>
        <dbReference type="ChEBI" id="CHEBI:10352"/>
        <dbReference type="ChEBI" id="CHEBI:15441"/>
        <dbReference type="EC" id="5.4.99.39"/>
    </reaction>
</comment>
<comment type="similarity">
    <text evidence="3">Belongs to the terpene cyclase/mutase family.</text>
</comment>
<protein>
    <recommendedName>
        <fullName>Beta-amyrin synthase</fullName>
        <ecNumber>5.4.99.39</ecNumber>
    </recommendedName>
</protein>
<reference key="1">
    <citation type="journal article" date="2000" name="Eur. J. Biochem.">
        <title>Molecular cloning and functional expression of triterpene synthases from pea (Pisum sativum) new alpha-amyrin-producing enzyme is a multifunctional triterpene synthase.</title>
        <authorList>
            <person name="Morita M."/>
            <person name="Shibuya M."/>
            <person name="Kushiro T."/>
            <person name="Masuda K."/>
            <person name="Ebizuka Y."/>
        </authorList>
    </citation>
    <scope>NUCLEOTIDE SEQUENCE [MRNA]</scope>
</reference>
<accession>Q9LRH8</accession>
<sequence>MWRLKIAEGGNDPYLFSTNNFVGRQTWEYDPEAGSEEERAQVEEARRNFYNNRFEVKPCGDLLWRFQVLRENNFKQTIGGVKIEDEEEITYEKTTTTLRRGTHHLATLQTSDGHWPAQIAGPLFFMPPLVFCVYITGHLDSVFPPEHRKEILRYIYCHQNEDGGWGLHIEGHSTMFCTALNYICMRILGEGPDGGEDNACVRARNWIRQHGGVTHIPSWGKTWLSILGVFDWLGSNPMPPEFWILPSFLPMHPAKMWCYCRLVYMPMSYLYGKRFVGPITPLILQLREELHTEPYEKINWTKTRHLCAKEDIYYPHPLIQDLIWDSLYIFTEPLLTRWPFNKLVRKRALEVTMKHIHYEDENSRYLTIGCVEKVLCMLACWVEDPNGDAFKKHIARVPDYLWISEDGMTMQSFGSQEWDAGFAVQALLATNLIEEIKPALAKGHDFIKKSQVTENPSGDFKSMHRHISKGSWTFSDQDHGWQVSDCTAEGLKCCLLLSLLPPEIVGEKMEPERLFDSVNLLLSLQSKKGGLAAWEPAGAQEWLELLNPTEFFADIVVEHEYVECTGSAIQALVLFKKLYPGHRKKEIENFIFNAVRFLEDTQTEDGSWYGNWGVCFTYGSWFALGGLAAAGKTYTNCAAIRKGVKFLLTTQREDGGWGESYLSSPKKIYVPLEGNRSNVVHTAWALMGLIHAGQSERDPTPLHRAAKLLINSQLEQGDWPQQEITGVFMKNCMLHYPMYRDIYPLWALAEYRRRVPLP</sequence>
<dbReference type="EC" id="5.4.99.39"/>
<dbReference type="EMBL" id="AB034802">
    <property type="protein sequence ID" value="BAA97558.1"/>
    <property type="molecule type" value="mRNA"/>
</dbReference>
<dbReference type="SMR" id="Q9LRH8"/>
<dbReference type="GO" id="GO:0005811">
    <property type="term" value="C:lipid droplet"/>
    <property type="evidence" value="ECO:0007669"/>
    <property type="project" value="InterPro"/>
</dbReference>
<dbReference type="GO" id="GO:0042300">
    <property type="term" value="F:beta-amyrin synthase activity"/>
    <property type="evidence" value="ECO:0007669"/>
    <property type="project" value="UniProtKB-EC"/>
</dbReference>
<dbReference type="GO" id="GO:0016104">
    <property type="term" value="P:triterpenoid biosynthetic process"/>
    <property type="evidence" value="ECO:0007669"/>
    <property type="project" value="InterPro"/>
</dbReference>
<dbReference type="CDD" id="cd02892">
    <property type="entry name" value="SQCY_1"/>
    <property type="match status" value="1"/>
</dbReference>
<dbReference type="FunFam" id="1.50.10.20:FF:000011">
    <property type="entry name" value="Terpene cyclase/mutase family member"/>
    <property type="match status" value="1"/>
</dbReference>
<dbReference type="FunFam" id="1.50.10.20:FF:000064">
    <property type="entry name" value="Uncharacterized protein"/>
    <property type="match status" value="1"/>
</dbReference>
<dbReference type="Gene3D" id="1.50.10.20">
    <property type="match status" value="2"/>
</dbReference>
<dbReference type="InterPro" id="IPR032696">
    <property type="entry name" value="SQ_cyclase_C"/>
</dbReference>
<dbReference type="InterPro" id="IPR032697">
    <property type="entry name" value="SQ_cyclase_N"/>
</dbReference>
<dbReference type="InterPro" id="IPR018333">
    <property type="entry name" value="Squalene_cyclase"/>
</dbReference>
<dbReference type="InterPro" id="IPR002365">
    <property type="entry name" value="Terpene_synthase_CS"/>
</dbReference>
<dbReference type="InterPro" id="IPR008930">
    <property type="entry name" value="Terpenoid_cyclase/PrenylTrfase"/>
</dbReference>
<dbReference type="NCBIfam" id="TIGR01787">
    <property type="entry name" value="squalene_cyclas"/>
    <property type="match status" value="1"/>
</dbReference>
<dbReference type="PANTHER" id="PTHR11764:SF58">
    <property type="entry name" value="BETA-AMYRIN SYNTHASE-RELATED"/>
    <property type="match status" value="1"/>
</dbReference>
<dbReference type="PANTHER" id="PTHR11764">
    <property type="entry name" value="TERPENE CYCLASE/MUTASE FAMILY MEMBER"/>
    <property type="match status" value="1"/>
</dbReference>
<dbReference type="Pfam" id="PF13243">
    <property type="entry name" value="SQHop_cyclase_C"/>
    <property type="match status" value="1"/>
</dbReference>
<dbReference type="Pfam" id="PF13249">
    <property type="entry name" value="SQHop_cyclase_N"/>
    <property type="match status" value="1"/>
</dbReference>
<dbReference type="SFLD" id="SFLDG01016">
    <property type="entry name" value="Prenyltransferase_Like_2"/>
    <property type="match status" value="1"/>
</dbReference>
<dbReference type="SUPFAM" id="SSF48239">
    <property type="entry name" value="Terpenoid cyclases/Protein prenyltransferases"/>
    <property type="match status" value="2"/>
</dbReference>
<dbReference type="PROSITE" id="PS01074">
    <property type="entry name" value="TERPENE_SYNTHASES"/>
    <property type="match status" value="1"/>
</dbReference>
<name>BAMS_PEA</name>
<organism>
    <name type="scientific">Pisum sativum</name>
    <name type="common">Garden pea</name>
    <name type="synonym">Lathyrus oleraceus</name>
    <dbReference type="NCBI Taxonomy" id="3888"/>
    <lineage>
        <taxon>Eukaryota</taxon>
        <taxon>Viridiplantae</taxon>
        <taxon>Streptophyta</taxon>
        <taxon>Embryophyta</taxon>
        <taxon>Tracheophyta</taxon>
        <taxon>Spermatophyta</taxon>
        <taxon>Magnoliopsida</taxon>
        <taxon>eudicotyledons</taxon>
        <taxon>Gunneridae</taxon>
        <taxon>Pentapetalae</taxon>
        <taxon>rosids</taxon>
        <taxon>fabids</taxon>
        <taxon>Fabales</taxon>
        <taxon>Fabaceae</taxon>
        <taxon>Papilionoideae</taxon>
        <taxon>50 kb inversion clade</taxon>
        <taxon>NPAAA clade</taxon>
        <taxon>Hologalegina</taxon>
        <taxon>IRL clade</taxon>
        <taxon>Fabeae</taxon>
        <taxon>Pisum</taxon>
    </lineage>
</organism>
<keyword id="KW-0413">Isomerase</keyword>
<keyword id="KW-0677">Repeat</keyword>